<keyword id="KW-0028">Amino-acid biosynthesis</keyword>
<keyword id="KW-0100">Branched-chain amino acid biosynthesis</keyword>
<keyword id="KW-0460">Magnesium</keyword>
<keyword id="KW-0479">Metal-binding</keyword>
<keyword id="KW-0521">NADP</keyword>
<keyword id="KW-0560">Oxidoreductase</keyword>
<comment type="function">
    <text evidence="1">Involved in the biosynthesis of branched-chain amino acids (BCAA). Catalyzes an alkyl-migration followed by a ketol-acid reduction of (S)-2-acetolactate (S2AL) to yield (R)-2,3-dihydroxy-isovalerate. In the isomerase reaction, S2AL is rearranged via a Mg-dependent methyl migration to produce 3-hydroxy-3-methyl-2-ketobutyrate (HMKB). In the reductase reaction, this 2-ketoacid undergoes a metal-dependent reduction by NADPH to yield (R)-2,3-dihydroxy-isovalerate.</text>
</comment>
<comment type="catalytic activity">
    <reaction evidence="1">
        <text>(2R)-2,3-dihydroxy-3-methylbutanoate + NADP(+) = (2S)-2-acetolactate + NADPH + H(+)</text>
        <dbReference type="Rhea" id="RHEA:22068"/>
        <dbReference type="ChEBI" id="CHEBI:15378"/>
        <dbReference type="ChEBI" id="CHEBI:49072"/>
        <dbReference type="ChEBI" id="CHEBI:57783"/>
        <dbReference type="ChEBI" id="CHEBI:58349"/>
        <dbReference type="ChEBI" id="CHEBI:58476"/>
        <dbReference type="EC" id="1.1.1.86"/>
    </reaction>
</comment>
<comment type="catalytic activity">
    <reaction evidence="1">
        <text>(2R,3R)-2,3-dihydroxy-3-methylpentanoate + NADP(+) = (S)-2-ethyl-2-hydroxy-3-oxobutanoate + NADPH + H(+)</text>
        <dbReference type="Rhea" id="RHEA:13493"/>
        <dbReference type="ChEBI" id="CHEBI:15378"/>
        <dbReference type="ChEBI" id="CHEBI:49256"/>
        <dbReference type="ChEBI" id="CHEBI:49258"/>
        <dbReference type="ChEBI" id="CHEBI:57783"/>
        <dbReference type="ChEBI" id="CHEBI:58349"/>
        <dbReference type="EC" id="1.1.1.86"/>
    </reaction>
</comment>
<comment type="cofactor">
    <cofactor evidence="1">
        <name>Mg(2+)</name>
        <dbReference type="ChEBI" id="CHEBI:18420"/>
    </cofactor>
    <text evidence="1">Binds 2 magnesium ions per subunit.</text>
</comment>
<comment type="pathway">
    <text evidence="1">Amino-acid biosynthesis; L-isoleucine biosynthesis; L-isoleucine from 2-oxobutanoate: step 2/4.</text>
</comment>
<comment type="pathway">
    <text evidence="1">Amino-acid biosynthesis; L-valine biosynthesis; L-valine from pyruvate: step 2/4.</text>
</comment>
<comment type="similarity">
    <text evidence="1">Belongs to the ketol-acid reductoisomerase family.</text>
</comment>
<evidence type="ECO:0000255" key="1">
    <source>
        <dbReference type="HAMAP-Rule" id="MF_00435"/>
    </source>
</evidence>
<evidence type="ECO:0000255" key="2">
    <source>
        <dbReference type="PROSITE-ProRule" id="PRU01197"/>
    </source>
</evidence>
<evidence type="ECO:0000255" key="3">
    <source>
        <dbReference type="PROSITE-ProRule" id="PRU01198"/>
    </source>
</evidence>
<accession>B4UAN4</accession>
<reference key="1">
    <citation type="submission" date="2008-08" db="EMBL/GenBank/DDBJ databases">
        <title>Complete sequence of Anaeromyxobacter sp. K.</title>
        <authorList>
            <consortium name="US DOE Joint Genome Institute"/>
            <person name="Lucas S."/>
            <person name="Copeland A."/>
            <person name="Lapidus A."/>
            <person name="Glavina del Rio T."/>
            <person name="Dalin E."/>
            <person name="Tice H."/>
            <person name="Bruce D."/>
            <person name="Goodwin L."/>
            <person name="Pitluck S."/>
            <person name="Saunders E."/>
            <person name="Brettin T."/>
            <person name="Detter J.C."/>
            <person name="Han C."/>
            <person name="Larimer F."/>
            <person name="Land M."/>
            <person name="Hauser L."/>
            <person name="Kyrpides N."/>
            <person name="Ovchinnikiva G."/>
            <person name="Beliaev A."/>
        </authorList>
    </citation>
    <scope>NUCLEOTIDE SEQUENCE [LARGE SCALE GENOMIC DNA]</scope>
    <source>
        <strain>K</strain>
    </source>
</reference>
<sequence>MATIYYDKDANLDLLKKRKVAIIGYGSQGHAHALNLRDSGVDVRVGLAAGSKSKAKAEGAGLRVLSVAEASKEADVIMVLIPDQTQKKVYDEEIAPHLSKGKALLFAHGFNIHFVQVRPPADVDVLLVAPKGPGHMVRRQYQDGRGIPGLVAVHQDATGQAKAVGLAYARGIGCTRAGVLETTFKEETETDLFGEQAVLCGGAAALVKNGFEVLVEAGYQPESAYFECLHELKLIVDLMYEGGLAWMRHSISDTAEYGDYTRGPRVVDGRSKDEMRKILKEIQGGHFAKEFILENQAGGPTMARYRAAEAAHPIEEVGKRLRDMMSWIREAKKDSSDPGSR</sequence>
<proteinExistence type="inferred from homology"/>
<name>ILVC_ANASK</name>
<feature type="chain" id="PRO_1000190906" description="Ketol-acid reductoisomerase (NADP(+))">
    <location>
        <begin position="1"/>
        <end position="341"/>
    </location>
</feature>
<feature type="domain" description="KARI N-terminal Rossmann" evidence="2">
    <location>
        <begin position="1"/>
        <end position="182"/>
    </location>
</feature>
<feature type="domain" description="KARI C-terminal knotted" evidence="3">
    <location>
        <begin position="183"/>
        <end position="328"/>
    </location>
</feature>
<feature type="active site" evidence="1">
    <location>
        <position position="108"/>
    </location>
</feature>
<feature type="binding site" evidence="1">
    <location>
        <begin position="25"/>
        <end position="28"/>
    </location>
    <ligand>
        <name>NADP(+)</name>
        <dbReference type="ChEBI" id="CHEBI:58349"/>
    </ligand>
</feature>
<feature type="binding site" evidence="1">
    <location>
        <position position="51"/>
    </location>
    <ligand>
        <name>NADP(+)</name>
        <dbReference type="ChEBI" id="CHEBI:58349"/>
    </ligand>
</feature>
<feature type="binding site" evidence="1">
    <location>
        <position position="53"/>
    </location>
    <ligand>
        <name>NADP(+)</name>
        <dbReference type="ChEBI" id="CHEBI:58349"/>
    </ligand>
</feature>
<feature type="binding site" evidence="1">
    <location>
        <begin position="83"/>
        <end position="86"/>
    </location>
    <ligand>
        <name>NADP(+)</name>
        <dbReference type="ChEBI" id="CHEBI:58349"/>
    </ligand>
</feature>
<feature type="binding site" evidence="1">
    <location>
        <position position="134"/>
    </location>
    <ligand>
        <name>NADP(+)</name>
        <dbReference type="ChEBI" id="CHEBI:58349"/>
    </ligand>
</feature>
<feature type="binding site" evidence="1">
    <location>
        <position position="191"/>
    </location>
    <ligand>
        <name>Mg(2+)</name>
        <dbReference type="ChEBI" id="CHEBI:18420"/>
        <label>1</label>
    </ligand>
</feature>
<feature type="binding site" evidence="1">
    <location>
        <position position="191"/>
    </location>
    <ligand>
        <name>Mg(2+)</name>
        <dbReference type="ChEBI" id="CHEBI:18420"/>
        <label>2</label>
    </ligand>
</feature>
<feature type="binding site" evidence="1">
    <location>
        <position position="195"/>
    </location>
    <ligand>
        <name>Mg(2+)</name>
        <dbReference type="ChEBI" id="CHEBI:18420"/>
        <label>1</label>
    </ligand>
</feature>
<feature type="binding site" evidence="1">
    <location>
        <position position="227"/>
    </location>
    <ligand>
        <name>Mg(2+)</name>
        <dbReference type="ChEBI" id="CHEBI:18420"/>
        <label>2</label>
    </ligand>
</feature>
<feature type="binding site" evidence="1">
    <location>
        <position position="231"/>
    </location>
    <ligand>
        <name>Mg(2+)</name>
        <dbReference type="ChEBI" id="CHEBI:18420"/>
        <label>2</label>
    </ligand>
</feature>
<feature type="binding site" evidence="1">
    <location>
        <position position="252"/>
    </location>
    <ligand>
        <name>substrate</name>
    </ligand>
</feature>
<protein>
    <recommendedName>
        <fullName evidence="1">Ketol-acid reductoisomerase (NADP(+))</fullName>
        <shortName evidence="1">KARI</shortName>
        <ecNumber evidence="1">1.1.1.86</ecNumber>
    </recommendedName>
    <alternativeName>
        <fullName evidence="1">Acetohydroxy-acid isomeroreductase</fullName>
        <shortName evidence="1">AHIR</shortName>
    </alternativeName>
    <alternativeName>
        <fullName evidence="1">Alpha-keto-beta-hydroxylacyl reductoisomerase</fullName>
    </alternativeName>
    <alternativeName>
        <fullName evidence="1">Ketol-acid reductoisomerase type 1</fullName>
    </alternativeName>
    <alternativeName>
        <fullName evidence="1">Ketol-acid reductoisomerase type I</fullName>
    </alternativeName>
</protein>
<gene>
    <name evidence="1" type="primary">ilvC</name>
    <name type="ordered locus">AnaeK_1902</name>
</gene>
<dbReference type="EC" id="1.1.1.86" evidence="1"/>
<dbReference type="EMBL" id="CP001131">
    <property type="protein sequence ID" value="ACG73130.1"/>
    <property type="molecule type" value="Genomic_DNA"/>
</dbReference>
<dbReference type="RefSeq" id="WP_012525944.1">
    <property type="nucleotide sequence ID" value="NC_011145.1"/>
</dbReference>
<dbReference type="SMR" id="B4UAN4"/>
<dbReference type="KEGG" id="ank:AnaeK_1902"/>
<dbReference type="HOGENOM" id="CLU_033821_0_1_7"/>
<dbReference type="OrthoDB" id="9804088at2"/>
<dbReference type="UniPathway" id="UPA00047">
    <property type="reaction ID" value="UER00056"/>
</dbReference>
<dbReference type="UniPathway" id="UPA00049">
    <property type="reaction ID" value="UER00060"/>
</dbReference>
<dbReference type="Proteomes" id="UP000001871">
    <property type="component" value="Chromosome"/>
</dbReference>
<dbReference type="GO" id="GO:0005829">
    <property type="term" value="C:cytosol"/>
    <property type="evidence" value="ECO:0007669"/>
    <property type="project" value="TreeGrafter"/>
</dbReference>
<dbReference type="GO" id="GO:0004455">
    <property type="term" value="F:ketol-acid reductoisomerase activity"/>
    <property type="evidence" value="ECO:0007669"/>
    <property type="project" value="UniProtKB-UniRule"/>
</dbReference>
<dbReference type="GO" id="GO:0000287">
    <property type="term" value="F:magnesium ion binding"/>
    <property type="evidence" value="ECO:0007669"/>
    <property type="project" value="UniProtKB-UniRule"/>
</dbReference>
<dbReference type="GO" id="GO:0050661">
    <property type="term" value="F:NADP binding"/>
    <property type="evidence" value="ECO:0007669"/>
    <property type="project" value="InterPro"/>
</dbReference>
<dbReference type="GO" id="GO:0009097">
    <property type="term" value="P:isoleucine biosynthetic process"/>
    <property type="evidence" value="ECO:0007669"/>
    <property type="project" value="UniProtKB-UniRule"/>
</dbReference>
<dbReference type="GO" id="GO:0009099">
    <property type="term" value="P:L-valine biosynthetic process"/>
    <property type="evidence" value="ECO:0007669"/>
    <property type="project" value="UniProtKB-UniRule"/>
</dbReference>
<dbReference type="CDD" id="cd00761">
    <property type="entry name" value="Glyco_tranf_GTA_type"/>
    <property type="match status" value="1"/>
</dbReference>
<dbReference type="FunFam" id="3.40.50.720:FF:000023">
    <property type="entry name" value="Ketol-acid reductoisomerase (NADP(+))"/>
    <property type="match status" value="1"/>
</dbReference>
<dbReference type="Gene3D" id="6.10.240.10">
    <property type="match status" value="1"/>
</dbReference>
<dbReference type="Gene3D" id="3.40.50.720">
    <property type="entry name" value="NAD(P)-binding Rossmann-like Domain"/>
    <property type="match status" value="1"/>
</dbReference>
<dbReference type="HAMAP" id="MF_00435">
    <property type="entry name" value="IlvC"/>
    <property type="match status" value="1"/>
</dbReference>
<dbReference type="InterPro" id="IPR008927">
    <property type="entry name" value="6-PGluconate_DH-like_C_sf"/>
</dbReference>
<dbReference type="InterPro" id="IPR013023">
    <property type="entry name" value="KARI"/>
</dbReference>
<dbReference type="InterPro" id="IPR000506">
    <property type="entry name" value="KARI_C"/>
</dbReference>
<dbReference type="InterPro" id="IPR013116">
    <property type="entry name" value="KARI_N"/>
</dbReference>
<dbReference type="InterPro" id="IPR014359">
    <property type="entry name" value="KARI_prok"/>
</dbReference>
<dbReference type="InterPro" id="IPR036291">
    <property type="entry name" value="NAD(P)-bd_dom_sf"/>
</dbReference>
<dbReference type="NCBIfam" id="TIGR00465">
    <property type="entry name" value="ilvC"/>
    <property type="match status" value="1"/>
</dbReference>
<dbReference type="NCBIfam" id="NF004017">
    <property type="entry name" value="PRK05479.1"/>
    <property type="match status" value="1"/>
</dbReference>
<dbReference type="NCBIfam" id="NF009940">
    <property type="entry name" value="PRK13403.1"/>
    <property type="match status" value="1"/>
</dbReference>
<dbReference type="PANTHER" id="PTHR21371">
    <property type="entry name" value="KETOL-ACID REDUCTOISOMERASE, MITOCHONDRIAL"/>
    <property type="match status" value="1"/>
</dbReference>
<dbReference type="PANTHER" id="PTHR21371:SF1">
    <property type="entry name" value="KETOL-ACID REDUCTOISOMERASE, MITOCHONDRIAL"/>
    <property type="match status" value="1"/>
</dbReference>
<dbReference type="Pfam" id="PF01450">
    <property type="entry name" value="KARI_C"/>
    <property type="match status" value="1"/>
</dbReference>
<dbReference type="Pfam" id="PF07991">
    <property type="entry name" value="KARI_N"/>
    <property type="match status" value="1"/>
</dbReference>
<dbReference type="PIRSF" id="PIRSF000116">
    <property type="entry name" value="IlvC_gammaproteo"/>
    <property type="match status" value="1"/>
</dbReference>
<dbReference type="SUPFAM" id="SSF48179">
    <property type="entry name" value="6-phosphogluconate dehydrogenase C-terminal domain-like"/>
    <property type="match status" value="1"/>
</dbReference>
<dbReference type="SUPFAM" id="SSF51735">
    <property type="entry name" value="NAD(P)-binding Rossmann-fold domains"/>
    <property type="match status" value="1"/>
</dbReference>
<dbReference type="PROSITE" id="PS51851">
    <property type="entry name" value="KARI_C"/>
    <property type="match status" value="1"/>
</dbReference>
<dbReference type="PROSITE" id="PS51850">
    <property type="entry name" value="KARI_N"/>
    <property type="match status" value="1"/>
</dbReference>
<organism>
    <name type="scientific">Anaeromyxobacter sp. (strain K)</name>
    <dbReference type="NCBI Taxonomy" id="447217"/>
    <lineage>
        <taxon>Bacteria</taxon>
        <taxon>Pseudomonadati</taxon>
        <taxon>Myxococcota</taxon>
        <taxon>Myxococcia</taxon>
        <taxon>Myxococcales</taxon>
        <taxon>Cystobacterineae</taxon>
        <taxon>Anaeromyxobacteraceae</taxon>
        <taxon>Anaeromyxobacter</taxon>
    </lineage>
</organism>